<reference key="1">
    <citation type="submission" date="1996-02" db="EMBL/GenBank/DDBJ databases">
        <authorList>
            <person name="Heuer S."/>
            <person name="Richerr J."/>
            <person name="Loerz H."/>
            <person name="Dresselhaus T."/>
        </authorList>
    </citation>
    <scope>NUCLEOTIDE SEQUENCE [MRNA]</scope>
    <source>
        <strain>cv. A188</strain>
    </source>
</reference>
<accession>P51425</accession>
<dbReference type="EMBL" id="X95458">
    <property type="protein sequence ID" value="CAA64728.1"/>
    <property type="molecule type" value="mRNA"/>
</dbReference>
<dbReference type="PIR" id="T03943">
    <property type="entry name" value="T03943"/>
</dbReference>
<dbReference type="RefSeq" id="NP_001105473.1">
    <property type="nucleotide sequence ID" value="NM_001112003.1"/>
</dbReference>
<dbReference type="SMR" id="P51425"/>
<dbReference type="FunCoup" id="P51425">
    <property type="interactions" value="1362"/>
</dbReference>
<dbReference type="STRING" id="4577.P51425"/>
<dbReference type="PaxDb" id="4577-GRMZM2G100467_P01"/>
<dbReference type="GeneID" id="542444"/>
<dbReference type="KEGG" id="zma:542444"/>
<dbReference type="MaizeGDB" id="123917"/>
<dbReference type="eggNOG" id="KOG0002">
    <property type="taxonomic scope" value="Eukaryota"/>
</dbReference>
<dbReference type="HOGENOM" id="CLU_181948_1_2_1"/>
<dbReference type="InParanoid" id="P51425"/>
<dbReference type="OrthoDB" id="274627at2759"/>
<dbReference type="Proteomes" id="UP000007305">
    <property type="component" value="Unplaced"/>
</dbReference>
<dbReference type="ExpressionAtlas" id="P51425">
    <property type="expression patterns" value="baseline and differential"/>
</dbReference>
<dbReference type="GO" id="GO:0022625">
    <property type="term" value="C:cytosolic large ribosomal subunit"/>
    <property type="evidence" value="ECO:0000318"/>
    <property type="project" value="GO_Central"/>
</dbReference>
<dbReference type="GO" id="GO:0003735">
    <property type="term" value="F:structural constituent of ribosome"/>
    <property type="evidence" value="ECO:0007669"/>
    <property type="project" value="InterPro"/>
</dbReference>
<dbReference type="GO" id="GO:0006412">
    <property type="term" value="P:translation"/>
    <property type="evidence" value="ECO:0007669"/>
    <property type="project" value="InterPro"/>
</dbReference>
<dbReference type="FunFam" id="1.10.1620.10:FF:000001">
    <property type="entry name" value="60S ribosomal protein-like L39"/>
    <property type="match status" value="1"/>
</dbReference>
<dbReference type="Gene3D" id="1.10.1620.10">
    <property type="entry name" value="Ribosomal protein L39e"/>
    <property type="match status" value="1"/>
</dbReference>
<dbReference type="HAMAP" id="MF_00629">
    <property type="entry name" value="Ribosomal_eL39"/>
    <property type="match status" value="1"/>
</dbReference>
<dbReference type="InterPro" id="IPR000077">
    <property type="entry name" value="Ribosomal_eL39"/>
</dbReference>
<dbReference type="InterPro" id="IPR020083">
    <property type="entry name" value="Ribosomal_eL39_CS"/>
</dbReference>
<dbReference type="InterPro" id="IPR023626">
    <property type="entry name" value="Ribosomal_eL39_dom_sf"/>
</dbReference>
<dbReference type="PANTHER" id="PTHR19970:SF0">
    <property type="entry name" value="LARGE RIBOSOMAL SUBUNIT PROTEIN EL39"/>
    <property type="match status" value="1"/>
</dbReference>
<dbReference type="PANTHER" id="PTHR19970">
    <property type="entry name" value="RIBOSOMAL PROTEIN L39E"/>
    <property type="match status" value="1"/>
</dbReference>
<dbReference type="Pfam" id="PF00832">
    <property type="entry name" value="Ribosomal_L39"/>
    <property type="match status" value="1"/>
</dbReference>
<dbReference type="SUPFAM" id="SSF48662">
    <property type="entry name" value="Ribosomal protein L39e"/>
    <property type="match status" value="1"/>
</dbReference>
<dbReference type="PROSITE" id="PS00051">
    <property type="entry name" value="RIBOSOMAL_L39E"/>
    <property type="match status" value="1"/>
</dbReference>
<name>RL39_MAIZE</name>
<evidence type="ECO:0000305" key="1"/>
<comment type="similarity">
    <text evidence="1">Belongs to the eukaryotic ribosomal protein eL39 family.</text>
</comment>
<protein>
    <recommendedName>
        <fullName evidence="1">Large ribosomal subunit protein eL39</fullName>
    </recommendedName>
    <alternativeName>
        <fullName>60S ribosomal protein L39</fullName>
    </alternativeName>
</protein>
<keyword id="KW-1185">Reference proteome</keyword>
<keyword id="KW-0687">Ribonucleoprotein</keyword>
<keyword id="KW-0689">Ribosomal protein</keyword>
<proteinExistence type="inferred from homology"/>
<organism>
    <name type="scientific">Zea mays</name>
    <name type="common">Maize</name>
    <dbReference type="NCBI Taxonomy" id="4577"/>
    <lineage>
        <taxon>Eukaryota</taxon>
        <taxon>Viridiplantae</taxon>
        <taxon>Streptophyta</taxon>
        <taxon>Embryophyta</taxon>
        <taxon>Tracheophyta</taxon>
        <taxon>Spermatophyta</taxon>
        <taxon>Magnoliopsida</taxon>
        <taxon>Liliopsida</taxon>
        <taxon>Poales</taxon>
        <taxon>Poaceae</taxon>
        <taxon>PACMAD clade</taxon>
        <taxon>Panicoideae</taxon>
        <taxon>Andropogonodae</taxon>
        <taxon>Andropogoneae</taxon>
        <taxon>Tripsacinae</taxon>
        <taxon>Zea</taxon>
    </lineage>
</organism>
<sequence length="51" mass="6513">MPSHKTFRIKKKLAKKMRQNRPIPYWIRMRTDNTIRYNAKRRHWRRTKLGF</sequence>
<gene>
    <name type="primary">RPL39</name>
    <name type="synonym">EC2E</name>
</gene>
<feature type="chain" id="PRO_0000127035" description="Large ribosomal subunit protein eL39">
    <location>
        <begin position="1"/>
        <end position="51"/>
    </location>
</feature>